<proteinExistence type="inferred from homology"/>
<feature type="chain" id="PRO_0000330123" description="Assembly factor CBP4">
    <location>
        <begin position="1"/>
        <end position="144"/>
    </location>
</feature>
<feature type="transmembrane region" description="Helical" evidence="2">
    <location>
        <begin position="10"/>
        <end position="32"/>
    </location>
</feature>
<feature type="region of interest" description="Disordered" evidence="3">
    <location>
        <begin position="109"/>
        <end position="144"/>
    </location>
</feature>
<feature type="coiled-coil region" evidence="2">
    <location>
        <begin position="108"/>
        <end position="138"/>
    </location>
</feature>
<feature type="compositionally biased region" description="Basic and acidic residues" evidence="3">
    <location>
        <begin position="109"/>
        <end position="131"/>
    </location>
</feature>
<gene>
    <name type="primary">CBP4</name>
    <name type="ordered locus">CAALFM_C108470WA</name>
    <name type="ORF">CaO19.392</name>
    <name type="ORF">CaO19.8022</name>
</gene>
<name>CBP4_CANAL</name>
<evidence type="ECO:0000250" key="1"/>
<evidence type="ECO:0000255" key="2"/>
<evidence type="ECO:0000256" key="3">
    <source>
        <dbReference type="SAM" id="MobiDB-lite"/>
    </source>
</evidence>
<evidence type="ECO:0000305" key="4"/>
<organism>
    <name type="scientific">Candida albicans (strain SC5314 / ATCC MYA-2876)</name>
    <name type="common">Yeast</name>
    <dbReference type="NCBI Taxonomy" id="237561"/>
    <lineage>
        <taxon>Eukaryota</taxon>
        <taxon>Fungi</taxon>
        <taxon>Dikarya</taxon>
        <taxon>Ascomycota</taxon>
        <taxon>Saccharomycotina</taxon>
        <taxon>Pichiomycetes</taxon>
        <taxon>Debaryomycetaceae</taxon>
        <taxon>Candida/Lodderomyces clade</taxon>
        <taxon>Candida</taxon>
    </lineage>
</organism>
<keyword id="KW-0143">Chaperone</keyword>
<keyword id="KW-0175">Coiled coil</keyword>
<keyword id="KW-0472">Membrane</keyword>
<keyword id="KW-0496">Mitochondrion</keyword>
<keyword id="KW-0999">Mitochondrion inner membrane</keyword>
<keyword id="KW-1185">Reference proteome</keyword>
<keyword id="KW-0812">Transmembrane</keyword>
<keyword id="KW-1133">Transmembrane helix</keyword>
<accession>Q59QC6</accession>
<accession>A0A1D8PEB2</accession>
<protein>
    <recommendedName>
        <fullName>Assembly factor CBP4</fullName>
    </recommendedName>
    <alternativeName>
        <fullName>Cytochrome b mRNA-processing protein 4</fullName>
    </alternativeName>
</protein>
<dbReference type="EMBL" id="CP017623">
    <property type="protein sequence ID" value="AOW26485.1"/>
    <property type="molecule type" value="Genomic_DNA"/>
</dbReference>
<dbReference type="RefSeq" id="XP_711880.1">
    <property type="nucleotide sequence ID" value="XM_706787.1"/>
</dbReference>
<dbReference type="SMR" id="Q59QC6"/>
<dbReference type="FunCoup" id="Q59QC6">
    <property type="interactions" value="49"/>
</dbReference>
<dbReference type="STRING" id="237561.Q59QC6"/>
<dbReference type="EnsemblFungi" id="C1_08470W_A-T">
    <property type="protein sequence ID" value="C1_08470W_A-T-p1"/>
    <property type="gene ID" value="C1_08470W_A"/>
</dbReference>
<dbReference type="GeneID" id="3646490"/>
<dbReference type="KEGG" id="cal:CAALFM_C108470WA"/>
<dbReference type="CGD" id="CAL0000197776">
    <property type="gene designation" value="orf19.8022"/>
</dbReference>
<dbReference type="VEuPathDB" id="FungiDB:C1_08470W_A"/>
<dbReference type="eggNOG" id="ENOG502S2G8">
    <property type="taxonomic scope" value="Eukaryota"/>
</dbReference>
<dbReference type="HOGENOM" id="CLU_147520_0_0_1"/>
<dbReference type="InParanoid" id="Q59QC6"/>
<dbReference type="OMA" id="KDPIWKT"/>
<dbReference type="OrthoDB" id="5576752at2759"/>
<dbReference type="PRO" id="PR:Q59QC6"/>
<dbReference type="Proteomes" id="UP000000559">
    <property type="component" value="Chromosome 1"/>
</dbReference>
<dbReference type="GO" id="GO:0005743">
    <property type="term" value="C:mitochondrial inner membrane"/>
    <property type="evidence" value="ECO:0007669"/>
    <property type="project" value="UniProtKB-SubCell"/>
</dbReference>
<dbReference type="GO" id="GO:0031966">
    <property type="term" value="C:mitochondrial membrane"/>
    <property type="evidence" value="ECO:0000318"/>
    <property type="project" value="GO_Central"/>
</dbReference>
<dbReference type="GO" id="GO:0034551">
    <property type="term" value="P:mitochondrial respiratory chain complex III assembly"/>
    <property type="evidence" value="ECO:0000318"/>
    <property type="project" value="GO_Central"/>
</dbReference>
<dbReference type="InterPro" id="IPR012420">
    <property type="entry name" value="Cbp4"/>
</dbReference>
<dbReference type="PANTHER" id="PTHR28202">
    <property type="entry name" value="ASSEMBLY FACTOR CBP4"/>
    <property type="match status" value="1"/>
</dbReference>
<dbReference type="PANTHER" id="PTHR28202:SF1">
    <property type="entry name" value="ASSEMBLY FACTOR CBP4"/>
    <property type="match status" value="1"/>
</dbReference>
<dbReference type="Pfam" id="PF07960">
    <property type="entry name" value="CBP4"/>
    <property type="match status" value="1"/>
</dbReference>
<comment type="function">
    <text evidence="1">Essential for the assembly of ubiquinol-cytochrome c reductase. It has a direct effect on the correct occurrence of the Rieske protein, core 4, core 5 and apocytochrome b (By similarity).</text>
</comment>
<comment type="subcellular location">
    <subcellularLocation>
        <location evidence="1">Mitochondrion inner membrane</location>
        <topology evidence="1">Single-pass membrane protein</topology>
    </subcellularLocation>
</comment>
<comment type="similarity">
    <text evidence="4">Belongs to the CBP4 family.</text>
</comment>
<sequence length="144" mass="17151">MSAVKPLWYRWARVYFAGGCLVGTGVLFWYTIRPTDEQLIARFSPEVKADYERNKELRQQEQKRLIEIVKETSSSSDPIWKAGPIGSPFEKEQRNLSMELVDAELFHKTKHEEQQKQEIDRANEESKEAERLMQQNKKPWWKFF</sequence>
<reference key="1">
    <citation type="journal article" date="2004" name="Proc. Natl. Acad. Sci. U.S.A.">
        <title>The diploid genome sequence of Candida albicans.</title>
        <authorList>
            <person name="Jones T."/>
            <person name="Federspiel N.A."/>
            <person name="Chibana H."/>
            <person name="Dungan J."/>
            <person name="Kalman S."/>
            <person name="Magee B.B."/>
            <person name="Newport G."/>
            <person name="Thorstenson Y.R."/>
            <person name="Agabian N."/>
            <person name="Magee P.T."/>
            <person name="Davis R.W."/>
            <person name="Scherer S."/>
        </authorList>
    </citation>
    <scope>NUCLEOTIDE SEQUENCE [LARGE SCALE GENOMIC DNA]</scope>
    <source>
        <strain>SC5314 / ATCC MYA-2876</strain>
    </source>
</reference>
<reference key="2">
    <citation type="journal article" date="2007" name="Genome Biol.">
        <title>Assembly of the Candida albicans genome into sixteen supercontigs aligned on the eight chromosomes.</title>
        <authorList>
            <person name="van het Hoog M."/>
            <person name="Rast T.J."/>
            <person name="Martchenko M."/>
            <person name="Grindle S."/>
            <person name="Dignard D."/>
            <person name="Hogues H."/>
            <person name="Cuomo C."/>
            <person name="Berriman M."/>
            <person name="Scherer S."/>
            <person name="Magee B.B."/>
            <person name="Whiteway M."/>
            <person name="Chibana H."/>
            <person name="Nantel A."/>
            <person name="Magee P.T."/>
        </authorList>
    </citation>
    <scope>GENOME REANNOTATION</scope>
    <source>
        <strain>SC5314 / ATCC MYA-2876</strain>
    </source>
</reference>
<reference key="3">
    <citation type="journal article" date="2013" name="Genome Biol.">
        <title>Assembly of a phased diploid Candida albicans genome facilitates allele-specific measurements and provides a simple model for repeat and indel structure.</title>
        <authorList>
            <person name="Muzzey D."/>
            <person name="Schwartz K."/>
            <person name="Weissman J.S."/>
            <person name="Sherlock G."/>
        </authorList>
    </citation>
    <scope>NUCLEOTIDE SEQUENCE [LARGE SCALE GENOMIC DNA]</scope>
    <scope>GENOME REANNOTATION</scope>
    <source>
        <strain>SC5314 / ATCC MYA-2876</strain>
    </source>
</reference>